<sequence length="264" mass="29138">MDNRPIGFLDSGVGGLTVVRELMRQLPHEEIVYIGDSARAPYGPRPAEQIREYTWQLVNFLLTKDVKMIVIACNTATAVVWEEIKAQLDIPVLGVILPGASAAIKSSQGGKIGVIGTPMTVQSDIYRQKIHDLDPDLQVESLACPKFAPLVESGALSTSVTKKVVYETLRPLVGKVDSLILGCTHYPLLRPIIQNVMGPKVQLIDSGAECVRDISVLLNYFEINRGRDAGPLHHRFYTTASSQSFAQIGEEWLEKEIHVEHVEL</sequence>
<comment type="function">
    <text evidence="1">Provides the (R)-glutamate required for cell wall biosynthesis.</text>
</comment>
<comment type="catalytic activity">
    <reaction evidence="1">
        <text>L-glutamate = D-glutamate</text>
        <dbReference type="Rhea" id="RHEA:12813"/>
        <dbReference type="ChEBI" id="CHEBI:29985"/>
        <dbReference type="ChEBI" id="CHEBI:29986"/>
        <dbReference type="EC" id="5.1.1.3"/>
    </reaction>
</comment>
<comment type="pathway">
    <text evidence="1">Cell wall biogenesis; peptidoglycan biosynthesis.</text>
</comment>
<comment type="similarity">
    <text evidence="1">Belongs to the aspartate/glutamate racemases family.</text>
</comment>
<organism>
    <name type="scientific">Streptococcus pneumoniae (strain P1031)</name>
    <dbReference type="NCBI Taxonomy" id="488223"/>
    <lineage>
        <taxon>Bacteria</taxon>
        <taxon>Bacillati</taxon>
        <taxon>Bacillota</taxon>
        <taxon>Bacilli</taxon>
        <taxon>Lactobacillales</taxon>
        <taxon>Streptococcaceae</taxon>
        <taxon>Streptococcus</taxon>
    </lineage>
</organism>
<name>MURI_STRZP</name>
<protein>
    <recommendedName>
        <fullName evidence="1">Glutamate racemase</fullName>
        <ecNumber evidence="1">5.1.1.3</ecNumber>
    </recommendedName>
</protein>
<feature type="chain" id="PRO_1000125624" description="Glutamate racemase">
    <location>
        <begin position="1"/>
        <end position="264"/>
    </location>
</feature>
<feature type="active site" description="Proton donor/acceptor" evidence="1">
    <location>
        <position position="73"/>
    </location>
</feature>
<feature type="active site" description="Proton donor/acceptor" evidence="1">
    <location>
        <position position="183"/>
    </location>
</feature>
<feature type="binding site" evidence="1">
    <location>
        <begin position="10"/>
        <end position="11"/>
    </location>
    <ligand>
        <name>substrate</name>
    </ligand>
</feature>
<feature type="binding site" evidence="1">
    <location>
        <begin position="42"/>
        <end position="43"/>
    </location>
    <ligand>
        <name>substrate</name>
    </ligand>
</feature>
<feature type="binding site" evidence="1">
    <location>
        <begin position="74"/>
        <end position="75"/>
    </location>
    <ligand>
        <name>substrate</name>
    </ligand>
</feature>
<feature type="binding site" evidence="1">
    <location>
        <begin position="184"/>
        <end position="185"/>
    </location>
    <ligand>
        <name>substrate</name>
    </ligand>
</feature>
<dbReference type="EC" id="5.1.1.3" evidence="1"/>
<dbReference type="EMBL" id="CP000920">
    <property type="protein sequence ID" value="ACO20946.1"/>
    <property type="molecule type" value="Genomic_DNA"/>
</dbReference>
<dbReference type="SMR" id="C1CMJ1"/>
<dbReference type="KEGG" id="spp:SPP_1881"/>
<dbReference type="HOGENOM" id="CLU_052344_0_2_9"/>
<dbReference type="UniPathway" id="UPA00219"/>
<dbReference type="GO" id="GO:0008881">
    <property type="term" value="F:glutamate racemase activity"/>
    <property type="evidence" value="ECO:0007669"/>
    <property type="project" value="UniProtKB-UniRule"/>
</dbReference>
<dbReference type="GO" id="GO:0071555">
    <property type="term" value="P:cell wall organization"/>
    <property type="evidence" value="ECO:0007669"/>
    <property type="project" value="UniProtKB-KW"/>
</dbReference>
<dbReference type="GO" id="GO:0009252">
    <property type="term" value="P:peptidoglycan biosynthetic process"/>
    <property type="evidence" value="ECO:0007669"/>
    <property type="project" value="UniProtKB-UniRule"/>
</dbReference>
<dbReference type="GO" id="GO:0008360">
    <property type="term" value="P:regulation of cell shape"/>
    <property type="evidence" value="ECO:0007669"/>
    <property type="project" value="UniProtKB-KW"/>
</dbReference>
<dbReference type="FunFam" id="3.40.50.1860:FF:000002">
    <property type="entry name" value="Glutamate racemase"/>
    <property type="match status" value="1"/>
</dbReference>
<dbReference type="Gene3D" id="3.40.50.1860">
    <property type="match status" value="2"/>
</dbReference>
<dbReference type="HAMAP" id="MF_00258">
    <property type="entry name" value="Glu_racemase"/>
    <property type="match status" value="1"/>
</dbReference>
<dbReference type="InterPro" id="IPR015942">
    <property type="entry name" value="Asp/Glu/hydantoin_racemase"/>
</dbReference>
<dbReference type="InterPro" id="IPR001920">
    <property type="entry name" value="Asp/Glu_race"/>
</dbReference>
<dbReference type="InterPro" id="IPR018187">
    <property type="entry name" value="Asp/Glu_racemase_AS_1"/>
</dbReference>
<dbReference type="InterPro" id="IPR033134">
    <property type="entry name" value="Asp/Glu_racemase_AS_2"/>
</dbReference>
<dbReference type="InterPro" id="IPR004391">
    <property type="entry name" value="Glu_race"/>
</dbReference>
<dbReference type="NCBIfam" id="TIGR00067">
    <property type="entry name" value="glut_race"/>
    <property type="match status" value="1"/>
</dbReference>
<dbReference type="NCBIfam" id="NF002035">
    <property type="entry name" value="PRK00865.1-3"/>
    <property type="match status" value="1"/>
</dbReference>
<dbReference type="PANTHER" id="PTHR21198">
    <property type="entry name" value="GLUTAMATE RACEMASE"/>
    <property type="match status" value="1"/>
</dbReference>
<dbReference type="PANTHER" id="PTHR21198:SF2">
    <property type="entry name" value="GLUTAMATE RACEMASE"/>
    <property type="match status" value="1"/>
</dbReference>
<dbReference type="Pfam" id="PF01177">
    <property type="entry name" value="Asp_Glu_race"/>
    <property type="match status" value="1"/>
</dbReference>
<dbReference type="SUPFAM" id="SSF53681">
    <property type="entry name" value="Aspartate/glutamate racemase"/>
    <property type="match status" value="2"/>
</dbReference>
<dbReference type="PROSITE" id="PS00923">
    <property type="entry name" value="ASP_GLU_RACEMASE_1"/>
    <property type="match status" value="1"/>
</dbReference>
<dbReference type="PROSITE" id="PS00924">
    <property type="entry name" value="ASP_GLU_RACEMASE_2"/>
    <property type="match status" value="1"/>
</dbReference>
<reference key="1">
    <citation type="journal article" date="2010" name="Genome Biol.">
        <title>Structure and dynamics of the pan-genome of Streptococcus pneumoniae and closely related species.</title>
        <authorList>
            <person name="Donati C."/>
            <person name="Hiller N.L."/>
            <person name="Tettelin H."/>
            <person name="Muzzi A."/>
            <person name="Croucher N.J."/>
            <person name="Angiuoli S.V."/>
            <person name="Oggioni M."/>
            <person name="Dunning Hotopp J.C."/>
            <person name="Hu F.Z."/>
            <person name="Riley D.R."/>
            <person name="Covacci A."/>
            <person name="Mitchell T.J."/>
            <person name="Bentley S.D."/>
            <person name="Kilian M."/>
            <person name="Ehrlich G.D."/>
            <person name="Rappuoli R."/>
            <person name="Moxon E.R."/>
            <person name="Masignani V."/>
        </authorList>
    </citation>
    <scope>NUCLEOTIDE SEQUENCE [LARGE SCALE GENOMIC DNA]</scope>
    <source>
        <strain>P1031</strain>
    </source>
</reference>
<gene>
    <name evidence="1" type="primary">murI</name>
    <name type="ordered locus">SPP_1881</name>
</gene>
<proteinExistence type="inferred from homology"/>
<evidence type="ECO:0000255" key="1">
    <source>
        <dbReference type="HAMAP-Rule" id="MF_00258"/>
    </source>
</evidence>
<accession>C1CMJ1</accession>
<keyword id="KW-0133">Cell shape</keyword>
<keyword id="KW-0961">Cell wall biogenesis/degradation</keyword>
<keyword id="KW-0413">Isomerase</keyword>
<keyword id="KW-0573">Peptidoglycan synthesis</keyword>